<gene>
    <name type="ordered locus">DEHA2G01892g</name>
</gene>
<protein>
    <recommendedName>
        <fullName evidence="1">Lon protease homolog 2, peroxisomal</fullName>
        <ecNumber evidence="1">3.4.21.53</ecNumber>
    </recommendedName>
</protein>
<feature type="chain" id="PRO_0000395793" description="Lon protease homolog 2, peroxisomal">
    <location>
        <begin position="1"/>
        <end position="1147"/>
    </location>
</feature>
<feature type="domain" description="Lon N-terminal" evidence="3">
    <location>
        <begin position="20"/>
        <end position="348"/>
    </location>
</feature>
<feature type="domain" description="Lon proteolytic" evidence="2">
    <location>
        <begin position="903"/>
        <end position="1131"/>
    </location>
</feature>
<feature type="region of interest" description="Disordered" evidence="4">
    <location>
        <begin position="395"/>
        <end position="444"/>
    </location>
</feature>
<feature type="region of interest" description="Disordered" evidence="4">
    <location>
        <begin position="561"/>
        <end position="626"/>
    </location>
</feature>
<feature type="compositionally biased region" description="Acidic residues" evidence="4">
    <location>
        <begin position="427"/>
        <end position="444"/>
    </location>
</feature>
<feature type="compositionally biased region" description="Basic and acidic residues" evidence="4">
    <location>
        <begin position="561"/>
        <end position="574"/>
    </location>
</feature>
<feature type="compositionally biased region" description="Basic and acidic residues" evidence="4">
    <location>
        <begin position="582"/>
        <end position="597"/>
    </location>
</feature>
<feature type="active site" evidence="1">
    <location>
        <position position="1006"/>
    </location>
</feature>
<feature type="active site" evidence="1">
    <location>
        <position position="1049"/>
    </location>
</feature>
<feature type="binding site" evidence="1">
    <location>
        <begin position="651"/>
        <end position="658"/>
    </location>
    <ligand>
        <name>ATP</name>
        <dbReference type="ChEBI" id="CHEBI:30616"/>
    </ligand>
</feature>
<sequence length="1147" mass="129573">MARYKPNQQNHTDPKQQVVLPTYKLDSNLVLLPGIIYNVTFSRFKAATLLSRFKSQVSNVSLITNLLNEYDFDSKQEEKDDVESKYMPPPISSDAVTGIKQFYQYEQQFKGKNDDSSKVEAEPQSEFDWLVLAINPNLEKIKEPQTSSDDEYENIVTIARVIGMVDDTSNIKLTLQALTRGIKHNKVKPTQTNEVLIDIDWNSNIDDVASKYDVLNSKVLKLFRSIDGFIVDYRQALTVAASLAKKGKQSKDLKQKGDLLTLNPLANSLYLHLAASKDFTKAYISLQKLFGTFNSSSNTKIDNKTFLRLIDLTCAIIPFPNHEKLKLLNKFNSIDRINEVNRMLESMIQVFYNLKKNNKIINHWFYNEATNIQRANVVASQLKSIRLILEGMTNKPDKDIKTNQSPPRQLVRRGNNNKPAKSPMSDDGNESNDEYDDDEDDDDDEDELKAITSFIKGKLPNISTLSSDTKRLIVKDFKRIKSSPPGNSDFHVIRNYLEIVADIPWDRYVTRFKSNKDIDLEFAKKQLDSDHYGLQHVKTRLIQYLVVLKLLGINAEKEFEKIESENSKKSKKNESSSGSMGKNDKQRSEKTFTRSDDSIVIANNDETSIAHETARNKNKKSKSLTTIEKSSLNKSLMVSKNNKSPIIMLVGPPGTGKTSLAKSIAKSLGRNFQRVSLGGIKDESEIRGHRRTYVGAMPGVIIQSLRKSRSMNPVILLDEIDKIIGGNNGVNKFNGDPSAALLEVLDPEQNTSFIDHYLGFPVDLSQVMFICTANEASNLSRPLLDRLEMIEVGAYDYDEKLVIGERYLLPRQIKRNGIPNADLIDVDKSVMQKVILDYTREAGVRNFERSLGRICRFKAVEYSQSLEKLSEYQPKVEIEDLPKYLGLPFANLSTELFESPIESAKCGVVNGLSYNSDGSGSVLVFESIGFNHEGKSGSSSLNMTGRLGDVLMESAKIGLTFIKSIIYKNLLNLSDRNLSENLIDKINNMEIHLHVPSGSIQKDGPSAGITVALSFLSLILEKPVPLDVAMTGEITLRGLVLPIGGIKEKILGAHLNGIKRVIVPRENRKDLIEEYCRSTNDFNQLNDLLLDNENKYNFKRCEPEKFWFDKYGITIHYAREFWDVIKAVWGDALLVKVEQARMVEYHL</sequence>
<accession>Q6BJJ8</accession>
<dbReference type="EC" id="3.4.21.53" evidence="1"/>
<dbReference type="EMBL" id="CR382139">
    <property type="protein sequence ID" value="CAG90071.2"/>
    <property type="molecule type" value="Genomic_DNA"/>
</dbReference>
<dbReference type="RefSeq" id="XP_461623.2">
    <property type="nucleotide sequence ID" value="XM_461623.1"/>
</dbReference>
<dbReference type="SMR" id="Q6BJJ8"/>
<dbReference type="STRING" id="284592.Q6BJJ8"/>
<dbReference type="GeneID" id="2904488"/>
<dbReference type="KEGG" id="dha:DEHA2G01892g"/>
<dbReference type="VEuPathDB" id="FungiDB:DEHA2G01892g"/>
<dbReference type="eggNOG" id="KOG2004">
    <property type="taxonomic scope" value="Eukaryota"/>
</dbReference>
<dbReference type="HOGENOM" id="CLU_004109_4_0_1"/>
<dbReference type="InParanoid" id="Q6BJJ8"/>
<dbReference type="OMA" id="RCMNPVI"/>
<dbReference type="OrthoDB" id="2411602at2759"/>
<dbReference type="Proteomes" id="UP000000599">
    <property type="component" value="Chromosome G"/>
</dbReference>
<dbReference type="GO" id="GO:0005782">
    <property type="term" value="C:peroxisomal matrix"/>
    <property type="evidence" value="ECO:0007669"/>
    <property type="project" value="UniProtKB-SubCell"/>
</dbReference>
<dbReference type="GO" id="GO:0005524">
    <property type="term" value="F:ATP binding"/>
    <property type="evidence" value="ECO:0007669"/>
    <property type="project" value="UniProtKB-UniRule"/>
</dbReference>
<dbReference type="GO" id="GO:0016887">
    <property type="term" value="F:ATP hydrolysis activity"/>
    <property type="evidence" value="ECO:0007669"/>
    <property type="project" value="UniProtKB-UniRule"/>
</dbReference>
<dbReference type="GO" id="GO:0004176">
    <property type="term" value="F:ATP-dependent peptidase activity"/>
    <property type="evidence" value="ECO:0007669"/>
    <property type="project" value="UniProtKB-UniRule"/>
</dbReference>
<dbReference type="GO" id="GO:0004252">
    <property type="term" value="F:serine-type endopeptidase activity"/>
    <property type="evidence" value="ECO:0007669"/>
    <property type="project" value="UniProtKB-UniRule"/>
</dbReference>
<dbReference type="GO" id="GO:0016558">
    <property type="term" value="P:protein import into peroxisome matrix"/>
    <property type="evidence" value="ECO:0007669"/>
    <property type="project" value="UniProtKB-UniRule"/>
</dbReference>
<dbReference type="GO" id="GO:0016485">
    <property type="term" value="P:protein processing"/>
    <property type="evidence" value="ECO:0007669"/>
    <property type="project" value="UniProtKB-UniRule"/>
</dbReference>
<dbReference type="GO" id="GO:0006515">
    <property type="term" value="P:protein quality control for misfolded or incompletely synthesized proteins"/>
    <property type="evidence" value="ECO:0007669"/>
    <property type="project" value="UniProtKB-UniRule"/>
</dbReference>
<dbReference type="CDD" id="cd19500">
    <property type="entry name" value="RecA-like_Lon"/>
    <property type="match status" value="1"/>
</dbReference>
<dbReference type="FunFam" id="3.40.50.300:FF:000021">
    <property type="entry name" value="Lon protease homolog"/>
    <property type="match status" value="1"/>
</dbReference>
<dbReference type="Gene3D" id="1.10.8.60">
    <property type="match status" value="1"/>
</dbReference>
<dbReference type="Gene3D" id="3.30.230.10">
    <property type="match status" value="1"/>
</dbReference>
<dbReference type="Gene3D" id="3.40.50.300">
    <property type="entry name" value="P-loop containing nucleotide triphosphate hydrolases"/>
    <property type="match status" value="1"/>
</dbReference>
<dbReference type="HAMAP" id="MF_03121">
    <property type="entry name" value="lonp2_euk"/>
    <property type="match status" value="1"/>
</dbReference>
<dbReference type="InterPro" id="IPR003593">
    <property type="entry name" value="AAA+_ATPase"/>
</dbReference>
<dbReference type="InterPro" id="IPR003959">
    <property type="entry name" value="ATPase_AAA_core"/>
</dbReference>
<dbReference type="InterPro" id="IPR054594">
    <property type="entry name" value="Lon_lid"/>
</dbReference>
<dbReference type="InterPro" id="IPR008269">
    <property type="entry name" value="Lon_proteolytic"/>
</dbReference>
<dbReference type="InterPro" id="IPR027065">
    <property type="entry name" value="Lon_Prtase"/>
</dbReference>
<dbReference type="InterPro" id="IPR003111">
    <property type="entry name" value="Lon_prtase_N"/>
</dbReference>
<dbReference type="InterPro" id="IPR027501">
    <property type="entry name" value="Lonp2_euk"/>
</dbReference>
<dbReference type="InterPro" id="IPR027417">
    <property type="entry name" value="P-loop_NTPase"/>
</dbReference>
<dbReference type="InterPro" id="IPR008268">
    <property type="entry name" value="Peptidase_S16_AS"/>
</dbReference>
<dbReference type="InterPro" id="IPR020568">
    <property type="entry name" value="Ribosomal_Su5_D2-typ_SF"/>
</dbReference>
<dbReference type="InterPro" id="IPR014721">
    <property type="entry name" value="Ribsml_uS5_D2-typ_fold_subgr"/>
</dbReference>
<dbReference type="PANTHER" id="PTHR10046">
    <property type="entry name" value="ATP DEPENDENT LON PROTEASE FAMILY MEMBER"/>
    <property type="match status" value="1"/>
</dbReference>
<dbReference type="Pfam" id="PF00004">
    <property type="entry name" value="AAA"/>
    <property type="match status" value="1"/>
</dbReference>
<dbReference type="Pfam" id="PF05362">
    <property type="entry name" value="Lon_C"/>
    <property type="match status" value="1"/>
</dbReference>
<dbReference type="Pfam" id="PF22667">
    <property type="entry name" value="Lon_lid"/>
    <property type="match status" value="1"/>
</dbReference>
<dbReference type="Pfam" id="PF02190">
    <property type="entry name" value="LON_substr_bdg"/>
    <property type="match status" value="1"/>
</dbReference>
<dbReference type="PRINTS" id="PR00830">
    <property type="entry name" value="ENDOLAPTASE"/>
</dbReference>
<dbReference type="SMART" id="SM00382">
    <property type="entry name" value="AAA"/>
    <property type="match status" value="1"/>
</dbReference>
<dbReference type="SUPFAM" id="SSF52540">
    <property type="entry name" value="P-loop containing nucleoside triphosphate hydrolases"/>
    <property type="match status" value="1"/>
</dbReference>
<dbReference type="SUPFAM" id="SSF54211">
    <property type="entry name" value="Ribosomal protein S5 domain 2-like"/>
    <property type="match status" value="1"/>
</dbReference>
<dbReference type="PROSITE" id="PS51787">
    <property type="entry name" value="LON_N"/>
    <property type="match status" value="1"/>
</dbReference>
<dbReference type="PROSITE" id="PS51786">
    <property type="entry name" value="LON_PROTEOLYTIC"/>
    <property type="match status" value="1"/>
</dbReference>
<dbReference type="PROSITE" id="PS01046">
    <property type="entry name" value="LON_SER"/>
    <property type="match status" value="1"/>
</dbReference>
<name>LONP2_DEBHA</name>
<keyword id="KW-0067">ATP-binding</keyword>
<keyword id="KW-0378">Hydrolase</keyword>
<keyword id="KW-0547">Nucleotide-binding</keyword>
<keyword id="KW-0576">Peroxisome</keyword>
<keyword id="KW-0645">Protease</keyword>
<keyword id="KW-1185">Reference proteome</keyword>
<keyword id="KW-0720">Serine protease</keyword>
<reference key="1">
    <citation type="journal article" date="2004" name="Nature">
        <title>Genome evolution in yeasts.</title>
        <authorList>
            <person name="Dujon B."/>
            <person name="Sherman D."/>
            <person name="Fischer G."/>
            <person name="Durrens P."/>
            <person name="Casaregola S."/>
            <person name="Lafontaine I."/>
            <person name="de Montigny J."/>
            <person name="Marck C."/>
            <person name="Neuveglise C."/>
            <person name="Talla E."/>
            <person name="Goffard N."/>
            <person name="Frangeul L."/>
            <person name="Aigle M."/>
            <person name="Anthouard V."/>
            <person name="Babour A."/>
            <person name="Barbe V."/>
            <person name="Barnay S."/>
            <person name="Blanchin S."/>
            <person name="Beckerich J.-M."/>
            <person name="Beyne E."/>
            <person name="Bleykasten C."/>
            <person name="Boisrame A."/>
            <person name="Boyer J."/>
            <person name="Cattolico L."/>
            <person name="Confanioleri F."/>
            <person name="de Daruvar A."/>
            <person name="Despons L."/>
            <person name="Fabre E."/>
            <person name="Fairhead C."/>
            <person name="Ferry-Dumazet H."/>
            <person name="Groppi A."/>
            <person name="Hantraye F."/>
            <person name="Hennequin C."/>
            <person name="Jauniaux N."/>
            <person name="Joyet P."/>
            <person name="Kachouri R."/>
            <person name="Kerrest A."/>
            <person name="Koszul R."/>
            <person name="Lemaire M."/>
            <person name="Lesur I."/>
            <person name="Ma L."/>
            <person name="Muller H."/>
            <person name="Nicaud J.-M."/>
            <person name="Nikolski M."/>
            <person name="Oztas S."/>
            <person name="Ozier-Kalogeropoulos O."/>
            <person name="Pellenz S."/>
            <person name="Potier S."/>
            <person name="Richard G.-F."/>
            <person name="Straub M.-L."/>
            <person name="Suleau A."/>
            <person name="Swennen D."/>
            <person name="Tekaia F."/>
            <person name="Wesolowski-Louvel M."/>
            <person name="Westhof E."/>
            <person name="Wirth B."/>
            <person name="Zeniou-Meyer M."/>
            <person name="Zivanovic Y."/>
            <person name="Bolotin-Fukuhara M."/>
            <person name="Thierry A."/>
            <person name="Bouchier C."/>
            <person name="Caudron B."/>
            <person name="Scarpelli C."/>
            <person name="Gaillardin C."/>
            <person name="Weissenbach J."/>
            <person name="Wincker P."/>
            <person name="Souciet J.-L."/>
        </authorList>
    </citation>
    <scope>NUCLEOTIDE SEQUENCE [LARGE SCALE GENOMIC DNA]</scope>
    <source>
        <strain>ATCC 36239 / CBS 767 / BCRC 21394 / JCM 1990 / NBRC 0083 / IGC 2968</strain>
    </source>
</reference>
<organism>
    <name type="scientific">Debaryomyces hansenii (strain ATCC 36239 / CBS 767 / BCRC 21394 / JCM 1990 / NBRC 0083 / IGC 2968)</name>
    <name type="common">Yeast</name>
    <name type="synonym">Torulaspora hansenii</name>
    <dbReference type="NCBI Taxonomy" id="284592"/>
    <lineage>
        <taxon>Eukaryota</taxon>
        <taxon>Fungi</taxon>
        <taxon>Dikarya</taxon>
        <taxon>Ascomycota</taxon>
        <taxon>Saccharomycotina</taxon>
        <taxon>Pichiomycetes</taxon>
        <taxon>Debaryomycetaceae</taxon>
        <taxon>Debaryomyces</taxon>
    </lineage>
</organism>
<evidence type="ECO:0000255" key="1">
    <source>
        <dbReference type="HAMAP-Rule" id="MF_03121"/>
    </source>
</evidence>
<evidence type="ECO:0000255" key="2">
    <source>
        <dbReference type="PROSITE-ProRule" id="PRU01122"/>
    </source>
</evidence>
<evidence type="ECO:0000255" key="3">
    <source>
        <dbReference type="PROSITE-ProRule" id="PRU01123"/>
    </source>
</evidence>
<evidence type="ECO:0000256" key="4">
    <source>
        <dbReference type="SAM" id="MobiDB-lite"/>
    </source>
</evidence>
<comment type="function">
    <text evidence="1">ATP-dependent serine protease that mediates the selective degradation of misfolded and unassembled polypeptides in the peroxisomal matrix. Necessary for type 2 peroxisome targeting signal (PTS2)-containing protein processing and facilitates peroxisome matrix protein import.</text>
</comment>
<comment type="catalytic activity">
    <reaction evidence="1">
        <text>Hydrolysis of proteins in presence of ATP.</text>
        <dbReference type="EC" id="3.4.21.53"/>
    </reaction>
</comment>
<comment type="subcellular location">
    <subcellularLocation>
        <location evidence="1">Peroxisome matrix</location>
    </subcellularLocation>
</comment>
<comment type="similarity">
    <text evidence="1">Belongs to the peptidase S16 family.</text>
</comment>
<proteinExistence type="inferred from homology"/>